<reference key="1">
    <citation type="submission" date="2000-09" db="EMBL/GenBank/DDBJ databases">
        <title>Complete sequence for the B1 strain of Newcastle disease virus.</title>
        <authorList>
            <person name="Sellers H.S."/>
            <person name="Seal B.S."/>
        </authorList>
    </citation>
    <scope>NUCLEOTIDE SEQUENCE [GENOMIC RNA]</scope>
</reference>
<comment type="RNA editing">
    <location>
        <position position="136" evidence="1"/>
    </location>
    <text evidence="1">Partially edited. RNA editing at this position consists of an insertion of one or two guanine nucleotides. The sequence displayed here is the V protein, derived from the +1G edited RNA. The unedited RNA gives rise to the P protein (AC Q9DLD6), the +2G edited RNA gives rise to the W protein (AC P0C765) (By similarity).</text>
</comment>
<comment type="similarity">
    <text evidence="3">Belongs to the paramyxoviruses W protein family.</text>
</comment>
<sequence length="179" mass="19257">MATFTDAEIDELFETSGTVIDNIITAQGKPAETVGRSAIPQGKTKVLSAAWEKHGSIQPPASQDNPDRQDRSDKQPSTPEQTTPHDSPPATSADQPPTQATDEAVDTQLRTGASNSLLLMLDKLSNKSSNAKKGAHGRAPKRGITNVRLNSRGVNPVAETVRKDRRTKSRPPLETRAQT</sequence>
<feature type="chain" id="PRO_0000390630" description="Protein W">
    <location>
        <begin position="1"/>
        <end position="179"/>
    </location>
</feature>
<feature type="region of interest" description="Disordered" evidence="2">
    <location>
        <begin position="45"/>
        <end position="179"/>
    </location>
</feature>
<feature type="compositionally biased region" description="Basic and acidic residues" evidence="2">
    <location>
        <begin position="65"/>
        <end position="74"/>
    </location>
</feature>
<feature type="compositionally biased region" description="Polar residues" evidence="2">
    <location>
        <begin position="75"/>
        <end position="101"/>
    </location>
</feature>
<feature type="compositionally biased region" description="Polar residues" evidence="2">
    <location>
        <begin position="108"/>
        <end position="117"/>
    </location>
</feature>
<accession>P0C766</accession>
<gene>
    <name type="primary">W</name>
</gene>
<proteinExistence type="inferred from homology"/>
<keyword id="KW-1185">Reference proteome</keyword>
<keyword id="KW-0691">RNA editing</keyword>
<evidence type="ECO:0000250" key="1"/>
<evidence type="ECO:0000256" key="2">
    <source>
        <dbReference type="SAM" id="MobiDB-lite"/>
    </source>
</evidence>
<evidence type="ECO:0000305" key="3"/>
<name>W_NDVB1</name>
<organism>
    <name type="scientific">Newcastle disease virus (strain Chicken/United States/B1/48)</name>
    <name type="common">NDV</name>
    <dbReference type="NCBI Taxonomy" id="652953"/>
    <lineage>
        <taxon>Viruses</taxon>
        <taxon>Riboviria</taxon>
        <taxon>Orthornavirae</taxon>
        <taxon>Negarnaviricota</taxon>
        <taxon>Haploviricotina</taxon>
        <taxon>Monjiviricetes</taxon>
        <taxon>Mononegavirales</taxon>
        <taxon>Paramyxoviridae</taxon>
        <taxon>Avulavirinae</taxon>
        <taxon>Orthoavulavirus</taxon>
        <taxon>Orthoavulavirus javaense</taxon>
        <taxon>Avian paramyxovirus 1</taxon>
    </lineage>
</organism>
<organismHost>
    <name type="scientific">Gallus gallus</name>
    <name type="common">Chicken</name>
    <dbReference type="NCBI Taxonomy" id="9031"/>
</organismHost>
<protein>
    <recommendedName>
        <fullName>Protein W</fullName>
    </recommendedName>
</protein>
<dbReference type="EMBL" id="AF309418">
    <property type="status" value="NOT_ANNOTATED_CDS"/>
    <property type="molecule type" value="Genomic_RNA"/>
</dbReference>
<dbReference type="SMR" id="P0C766"/>
<dbReference type="Proteomes" id="UP000002328">
    <property type="component" value="Segment"/>
</dbReference>
<dbReference type="InterPro" id="IPR025909">
    <property type="entry name" value="Soyouz_module"/>
</dbReference>
<dbReference type="Pfam" id="PF14313">
    <property type="entry name" value="Soyouz_module"/>
    <property type="match status" value="1"/>
</dbReference>